<protein>
    <recommendedName>
        <fullName evidence="4">Dihydroniloticin synthase CYP71CD1</fullName>
        <ecNumber evidence="3">1.14.14.-</ecNumber>
    </recommendedName>
    <alternativeName>
        <fullName evidence="4">Cytochrome P450 family 71 subfamily CD polypeptide 1</fullName>
        <shortName evidence="4">CsCYP71CD1</shortName>
    </alternativeName>
</protein>
<dbReference type="EC" id="1.14.14.-" evidence="3"/>
<dbReference type="EMBL" id="KK784879">
    <property type="protein sequence ID" value="KDO78504.1"/>
    <property type="molecule type" value="Genomic_DNA"/>
</dbReference>
<dbReference type="SMR" id="A0A067GFT7"/>
<dbReference type="PaxDb" id="2711-XP_006467299-1"/>
<dbReference type="GeneID" id="102618084"/>
<dbReference type="KEGG" id="cit:102618084"/>
<dbReference type="eggNOG" id="KOG0156">
    <property type="taxonomic scope" value="Eukaryota"/>
</dbReference>
<dbReference type="OrthoDB" id="954796at71240"/>
<dbReference type="UniPathway" id="UPA00213"/>
<dbReference type="Proteomes" id="UP000027120">
    <property type="component" value="Unassembled WGS sequence"/>
</dbReference>
<dbReference type="GO" id="GO:0016020">
    <property type="term" value="C:membrane"/>
    <property type="evidence" value="ECO:0007669"/>
    <property type="project" value="UniProtKB-SubCell"/>
</dbReference>
<dbReference type="GO" id="GO:0020037">
    <property type="term" value="F:heme binding"/>
    <property type="evidence" value="ECO:0007669"/>
    <property type="project" value="InterPro"/>
</dbReference>
<dbReference type="GO" id="GO:0005506">
    <property type="term" value="F:iron ion binding"/>
    <property type="evidence" value="ECO:0007669"/>
    <property type="project" value="InterPro"/>
</dbReference>
<dbReference type="GO" id="GO:0004497">
    <property type="term" value="F:monooxygenase activity"/>
    <property type="evidence" value="ECO:0007669"/>
    <property type="project" value="UniProtKB-KW"/>
</dbReference>
<dbReference type="GO" id="GO:0016705">
    <property type="term" value="F:oxidoreductase activity, acting on paired donors, with incorporation or reduction of molecular oxygen"/>
    <property type="evidence" value="ECO:0007669"/>
    <property type="project" value="InterPro"/>
</dbReference>
<dbReference type="CDD" id="cd11072">
    <property type="entry name" value="CYP71-like"/>
    <property type="match status" value="1"/>
</dbReference>
<dbReference type="FunFam" id="1.10.630.10:FF:000043">
    <property type="entry name" value="Cytochrome P450 99A2"/>
    <property type="match status" value="1"/>
</dbReference>
<dbReference type="Gene3D" id="1.10.630.10">
    <property type="entry name" value="Cytochrome P450"/>
    <property type="match status" value="1"/>
</dbReference>
<dbReference type="InterPro" id="IPR001128">
    <property type="entry name" value="Cyt_P450"/>
</dbReference>
<dbReference type="InterPro" id="IPR017972">
    <property type="entry name" value="Cyt_P450_CS"/>
</dbReference>
<dbReference type="InterPro" id="IPR002401">
    <property type="entry name" value="Cyt_P450_E_grp-I"/>
</dbReference>
<dbReference type="InterPro" id="IPR036396">
    <property type="entry name" value="Cyt_P450_sf"/>
</dbReference>
<dbReference type="PANTHER" id="PTHR47955">
    <property type="entry name" value="CYTOCHROME P450 FAMILY 71 PROTEIN"/>
    <property type="match status" value="1"/>
</dbReference>
<dbReference type="PANTHER" id="PTHR47955:SF9">
    <property type="entry name" value="PREMNASPIRODIENE OXYGENASE-LIKE"/>
    <property type="match status" value="1"/>
</dbReference>
<dbReference type="Pfam" id="PF00067">
    <property type="entry name" value="p450"/>
    <property type="match status" value="1"/>
</dbReference>
<dbReference type="PRINTS" id="PR00463">
    <property type="entry name" value="EP450I"/>
</dbReference>
<dbReference type="PRINTS" id="PR00385">
    <property type="entry name" value="P450"/>
</dbReference>
<dbReference type="SUPFAM" id="SSF48264">
    <property type="entry name" value="Cytochrome P450"/>
    <property type="match status" value="1"/>
</dbReference>
<dbReference type="PROSITE" id="PS00086">
    <property type="entry name" value="CYTOCHROME_P450"/>
    <property type="match status" value="1"/>
</dbReference>
<evidence type="ECO:0000250" key="1">
    <source>
        <dbReference type="UniProtKB" id="Q96242"/>
    </source>
</evidence>
<evidence type="ECO:0000255" key="2"/>
<evidence type="ECO:0000269" key="3">
    <source>
    </source>
</evidence>
<evidence type="ECO:0000303" key="4">
    <source>
    </source>
</evidence>
<evidence type="ECO:0000305" key="5"/>
<evidence type="ECO:0000312" key="6">
    <source>
        <dbReference type="EMBL" id="KDO78504.1"/>
    </source>
</evidence>
<keyword id="KW-0349">Heme</keyword>
<keyword id="KW-0408">Iron</keyword>
<keyword id="KW-0472">Membrane</keyword>
<keyword id="KW-0479">Metal-binding</keyword>
<keyword id="KW-0503">Monooxygenase</keyword>
<keyword id="KW-0560">Oxidoreductase</keyword>
<keyword id="KW-1185">Reference proteome</keyword>
<keyword id="KW-0812">Transmembrane</keyword>
<keyword id="KW-1133">Transmembrane helix</keyword>
<accession>A0A067GFT7</accession>
<name>C1CD1_CITSI</name>
<reference key="1">
    <citation type="submission" date="2014-04" db="EMBL/GenBank/DDBJ databases">
        <authorList>
            <consortium name="International Citrus Genome Consortium"/>
            <person name="Gmitter F."/>
            <person name="Chen C."/>
            <person name="Farmerie W."/>
            <person name="Harkins T."/>
            <person name="Desany B."/>
            <person name="Mohiuddin M."/>
            <person name="Kodira C."/>
            <person name="Borodovsky M."/>
            <person name="Lomsadze A."/>
            <person name="Burns P."/>
            <person name="Jenkins J."/>
            <person name="Prochnik S."/>
            <person name="Shu S."/>
            <person name="Chapman J."/>
            <person name="Pitluck S."/>
            <person name="Schmutz J."/>
            <person name="Rokhsar D."/>
        </authorList>
    </citation>
    <scope>NUCLEOTIDE SEQUENCE [LARGE SCALE GENOMIC DNA]</scope>
    <source>
        <strain>cv. Ridge Pineapple sweet orange</strain>
    </source>
</reference>
<reference key="2">
    <citation type="journal article" date="2019" name="Proc. Natl. Acad. Sci. U.S.A.">
        <title>Identification of key enzymes responsible for protolimonoid biosynthesis in plants: Opening the door to azadirachtin production.</title>
        <authorList>
            <person name="Hodgson H."/>
            <person name="De La Pena R."/>
            <person name="Stephenson M.J."/>
            <person name="Thimmappa R."/>
            <person name="Vincent J.L."/>
            <person name="Sattely E.S."/>
            <person name="Osbourn A."/>
        </authorList>
    </citation>
    <scope>FUNCTION</scope>
    <scope>CATALYTIC ACTIVITY</scope>
    <scope>PATHWAY</scope>
    <scope>TISSUE SPECIFICITY</scope>
    <source>
        <strain>cv. Valencia</strain>
    </source>
</reference>
<proteinExistence type="evidence at protein level"/>
<sequence>MEQQFDYFTVTSLLVFLTFLLRLVWGWKKSSDKIKIRLPPGPSKLPIIGSLHHLIGLDVDLPYYALTDLANKYGPLMHLQLGKMSLVVASSAKMFKELMKENDLAISQRPVPYVARVLEDAGRDIAFVPYGDYWRQIRKISRMELFSVKKVQSLHYIREDQSSKLVESIRGHAGTVMNLSKAVSDYTSTVVARAAFGSGCKDQDKFIRLSLEMVAAAGAVSTLPDMFPALGFIPILSGKKAFLKSIQTEADKILDVIIDEHIQKTKSNEYDGKESDKEDIVDVLLRLEKSGELEIPITTQDIKAVIWSVFAGGTDTSSTTTLWTMSELMRNPKVMEKVQAEIREKLKGKKEIYESDIQDLHYMRAVIKEALRLRIPGPLLLPRETMEPIEVDGYVIPERTKILFNAWAVTRDPQLWENPESFIPERFIENPLDYKGTNYEFTPFGSGRRICPGMNFGIANVELPLAKLLYFFNWQLPPGMQPHELDMTAKFGVVCGRKNDLFLIPTPYNNIP</sequence>
<gene>
    <name evidence="4" type="primary">CYP71CD1</name>
    <name evidence="6" type="ORF">CISIN_1g010369mg</name>
</gene>
<feature type="chain" id="PRO_0000461363" description="Dihydroniloticin synthase CYP71CD1">
    <location>
        <begin position="1"/>
        <end position="512"/>
    </location>
</feature>
<feature type="transmembrane region" description="Helical" evidence="2">
    <location>
        <begin position="7"/>
        <end position="27"/>
    </location>
</feature>
<feature type="binding site" description="axial binding residue" evidence="1">
    <location>
        <position position="451"/>
    </location>
    <ligand>
        <name>heme</name>
        <dbReference type="ChEBI" id="CHEBI:30413"/>
    </ligand>
    <ligandPart>
        <name>Fe</name>
        <dbReference type="ChEBI" id="CHEBI:18248"/>
    </ligandPart>
</feature>
<comment type="function">
    <text evidence="3">Monooxygenase involved in the biosynthesis of limonoids triterpene natural products such as limonin, a compound with insecticidal activity responsible for the bitter taste in citrus (PubMed:31371503). Catalyzes the conversion of tirucalladienol to dihydroniloticin (PubMed:31371503).</text>
</comment>
<comment type="catalytic activity">
    <reaction evidence="3">
        <text>tirucalla-7,24-dien-3beta-ol + 2 reduced [NADPH--hemoprotein reductase] + 2 O2 = dihydroniloticin + 2 oxidized [NADPH--hemoprotein reductase] + 2 H2O + 2 H(+)</text>
        <dbReference type="Rhea" id="RHEA:80279"/>
        <dbReference type="Rhea" id="RHEA-COMP:11964"/>
        <dbReference type="Rhea" id="RHEA-COMP:11965"/>
        <dbReference type="ChEBI" id="CHEBI:15377"/>
        <dbReference type="ChEBI" id="CHEBI:15378"/>
        <dbReference type="ChEBI" id="CHEBI:15379"/>
        <dbReference type="ChEBI" id="CHEBI:57618"/>
        <dbReference type="ChEBI" id="CHEBI:58210"/>
        <dbReference type="ChEBI" id="CHEBI:63468"/>
        <dbReference type="ChEBI" id="CHEBI:231450"/>
    </reaction>
    <physiologicalReaction direction="left-to-right" evidence="3">
        <dbReference type="Rhea" id="RHEA:80280"/>
    </physiologicalReaction>
</comment>
<comment type="cofactor">
    <cofactor evidence="1">
        <name>heme</name>
        <dbReference type="ChEBI" id="CHEBI:30413"/>
    </cofactor>
</comment>
<comment type="pathway">
    <text evidence="3">Secondary metabolite biosynthesis; terpenoid biosynthesis.</text>
</comment>
<comment type="subcellular location">
    <subcellularLocation>
        <location evidence="2">Membrane</location>
        <topology evidence="2">Single-pass membrane protein</topology>
    </subcellularLocation>
</comment>
<comment type="tissue specificity">
    <text evidence="3">Accumulates in mature fruits and in juice vesicles.</text>
</comment>
<comment type="similarity">
    <text evidence="5">Belongs to the cytochrome P450 family.</text>
</comment>
<organism>
    <name type="scientific">Citrus sinensis</name>
    <name type="common">Sweet orange</name>
    <name type="synonym">Citrus aurantium var. sinensis</name>
    <dbReference type="NCBI Taxonomy" id="2711"/>
    <lineage>
        <taxon>Eukaryota</taxon>
        <taxon>Viridiplantae</taxon>
        <taxon>Streptophyta</taxon>
        <taxon>Embryophyta</taxon>
        <taxon>Tracheophyta</taxon>
        <taxon>Spermatophyta</taxon>
        <taxon>Magnoliopsida</taxon>
        <taxon>eudicotyledons</taxon>
        <taxon>Gunneridae</taxon>
        <taxon>Pentapetalae</taxon>
        <taxon>rosids</taxon>
        <taxon>malvids</taxon>
        <taxon>Sapindales</taxon>
        <taxon>Rutaceae</taxon>
        <taxon>Aurantioideae</taxon>
        <taxon>Citrus</taxon>
    </lineage>
</organism>